<feature type="signal peptide" evidence="2">
    <location>
        <begin position="1"/>
        <end position="17"/>
    </location>
</feature>
<feature type="chain" id="PRO_0000393541" description="Probable 1,4-beta-D-glucan cellobiohydrolase A">
    <location>
        <begin position="18"/>
        <end position="452"/>
    </location>
</feature>
<feature type="region of interest" description="Disordered" evidence="3">
    <location>
        <begin position="405"/>
        <end position="431"/>
    </location>
</feature>
<feature type="active site" description="Nucleophile" evidence="1">
    <location>
        <position position="226"/>
    </location>
</feature>
<feature type="active site" description="Proton donor" evidence="1">
    <location>
        <position position="231"/>
    </location>
</feature>
<feature type="glycosylation site" description="N-linked (GlcNAc...) asparagine" evidence="2">
    <location>
        <position position="81"/>
    </location>
</feature>
<feature type="glycosylation site" description="N-linked (GlcNAc...) asparagine" evidence="2">
    <location>
        <position position="284"/>
    </location>
</feature>
<keyword id="KW-0119">Carbohydrate metabolism</keyword>
<keyword id="KW-0136">Cellulose degradation</keyword>
<keyword id="KW-0325">Glycoprotein</keyword>
<keyword id="KW-0326">Glycosidase</keyword>
<keyword id="KW-0378">Hydrolase</keyword>
<keyword id="KW-0624">Polysaccharide degradation</keyword>
<keyword id="KW-1185">Reference proteome</keyword>
<keyword id="KW-0964">Secreted</keyword>
<keyword id="KW-0732">Signal</keyword>
<reference key="1">
    <citation type="journal article" date="2005" name="Nature">
        <title>Genomic sequence of the pathogenic and allergenic filamentous fungus Aspergillus fumigatus.</title>
        <authorList>
            <person name="Nierman W.C."/>
            <person name="Pain A."/>
            <person name="Anderson M.J."/>
            <person name="Wortman J.R."/>
            <person name="Kim H.S."/>
            <person name="Arroyo J."/>
            <person name="Berriman M."/>
            <person name="Abe K."/>
            <person name="Archer D.B."/>
            <person name="Bermejo C."/>
            <person name="Bennett J.W."/>
            <person name="Bowyer P."/>
            <person name="Chen D."/>
            <person name="Collins M."/>
            <person name="Coulsen R."/>
            <person name="Davies R."/>
            <person name="Dyer P.S."/>
            <person name="Farman M.L."/>
            <person name="Fedorova N."/>
            <person name="Fedorova N.D."/>
            <person name="Feldblyum T.V."/>
            <person name="Fischer R."/>
            <person name="Fosker N."/>
            <person name="Fraser A."/>
            <person name="Garcia J.L."/>
            <person name="Garcia M.J."/>
            <person name="Goble A."/>
            <person name="Goldman G.H."/>
            <person name="Gomi K."/>
            <person name="Griffith-Jones S."/>
            <person name="Gwilliam R."/>
            <person name="Haas B.J."/>
            <person name="Haas H."/>
            <person name="Harris D.E."/>
            <person name="Horiuchi H."/>
            <person name="Huang J."/>
            <person name="Humphray S."/>
            <person name="Jimenez J."/>
            <person name="Keller N."/>
            <person name="Khouri H."/>
            <person name="Kitamoto K."/>
            <person name="Kobayashi T."/>
            <person name="Konzack S."/>
            <person name="Kulkarni R."/>
            <person name="Kumagai T."/>
            <person name="Lafton A."/>
            <person name="Latge J.-P."/>
            <person name="Li W."/>
            <person name="Lord A."/>
            <person name="Lu C."/>
            <person name="Majoros W.H."/>
            <person name="May G.S."/>
            <person name="Miller B.L."/>
            <person name="Mohamoud Y."/>
            <person name="Molina M."/>
            <person name="Monod M."/>
            <person name="Mouyna I."/>
            <person name="Mulligan S."/>
            <person name="Murphy L.D."/>
            <person name="O'Neil S."/>
            <person name="Paulsen I."/>
            <person name="Penalva M.A."/>
            <person name="Pertea M."/>
            <person name="Price C."/>
            <person name="Pritchard B.L."/>
            <person name="Quail M.A."/>
            <person name="Rabbinowitsch E."/>
            <person name="Rawlins N."/>
            <person name="Rajandream M.A."/>
            <person name="Reichard U."/>
            <person name="Renauld H."/>
            <person name="Robson G.D."/>
            <person name="Rodriguez de Cordoba S."/>
            <person name="Rodriguez-Pena J.M."/>
            <person name="Ronning C.M."/>
            <person name="Rutter S."/>
            <person name="Salzberg S.L."/>
            <person name="Sanchez M."/>
            <person name="Sanchez-Ferrero J.C."/>
            <person name="Saunders D."/>
            <person name="Seeger K."/>
            <person name="Squares R."/>
            <person name="Squares S."/>
            <person name="Takeuchi M."/>
            <person name="Tekaia F."/>
            <person name="Turner G."/>
            <person name="Vazquez de Aldana C.R."/>
            <person name="Weidman J."/>
            <person name="White O."/>
            <person name="Woodward J.R."/>
            <person name="Yu J.-H."/>
            <person name="Fraser C.M."/>
            <person name="Galagan J.E."/>
            <person name="Asai K."/>
            <person name="Machida M."/>
            <person name="Hall N."/>
            <person name="Barrell B.G."/>
            <person name="Denning D.W."/>
        </authorList>
    </citation>
    <scope>NUCLEOTIDE SEQUENCE [LARGE SCALE GENOMIC DNA]</scope>
    <source>
        <strain>ATCC MYA-4609 / CBS 101355 / FGSC A1100 / Af293</strain>
    </source>
</reference>
<gene>
    <name type="primary">cbhA</name>
    <name type="synonym">celD</name>
    <name type="ORF">AFUA_6G07070</name>
</gene>
<dbReference type="EC" id="3.2.1.91"/>
<dbReference type="EMBL" id="AAHF01000006">
    <property type="protein sequence ID" value="EAL88562.1"/>
    <property type="molecule type" value="Genomic_DNA"/>
</dbReference>
<dbReference type="RefSeq" id="XP_750600.1">
    <property type="nucleotide sequence ID" value="XM_745507.1"/>
</dbReference>
<dbReference type="SMR" id="Q4WNA2"/>
<dbReference type="STRING" id="330879.Q4WNA2"/>
<dbReference type="GlyCosmos" id="Q4WNA2">
    <property type="glycosylation" value="2 sites, No reported glycans"/>
</dbReference>
<dbReference type="EnsemblFungi" id="EAL88562">
    <property type="protein sequence ID" value="EAL88562"/>
    <property type="gene ID" value="AFUA_6G07070"/>
</dbReference>
<dbReference type="GeneID" id="3508755"/>
<dbReference type="KEGG" id="afm:AFUA_6G07070"/>
<dbReference type="VEuPathDB" id="FungiDB:Afu6g07070"/>
<dbReference type="eggNOG" id="ENOG502QPHV">
    <property type="taxonomic scope" value="Eukaryota"/>
</dbReference>
<dbReference type="HOGENOM" id="CLU_020817_3_2_1"/>
<dbReference type="InParanoid" id="Q4WNA2"/>
<dbReference type="OMA" id="NTYQMFQ"/>
<dbReference type="OrthoDB" id="412382at2759"/>
<dbReference type="Proteomes" id="UP000002530">
    <property type="component" value="Chromosome 6"/>
</dbReference>
<dbReference type="GO" id="GO:0005576">
    <property type="term" value="C:extracellular region"/>
    <property type="evidence" value="ECO:0007669"/>
    <property type="project" value="UniProtKB-SubCell"/>
</dbReference>
<dbReference type="GO" id="GO:0016162">
    <property type="term" value="F:cellulose 1,4-beta-cellobiosidase activity"/>
    <property type="evidence" value="ECO:0000318"/>
    <property type="project" value="GO_Central"/>
</dbReference>
<dbReference type="GO" id="GO:0030245">
    <property type="term" value="P:cellulose catabolic process"/>
    <property type="evidence" value="ECO:0007669"/>
    <property type="project" value="UniProtKB-KW"/>
</dbReference>
<dbReference type="GO" id="GO:0009251">
    <property type="term" value="P:glucan catabolic process"/>
    <property type="evidence" value="ECO:0000318"/>
    <property type="project" value="GO_Central"/>
</dbReference>
<dbReference type="CDD" id="cd07999">
    <property type="entry name" value="GH7_CBH_EG"/>
    <property type="match status" value="1"/>
</dbReference>
<dbReference type="FunFam" id="2.70.100.10:FF:000001">
    <property type="entry name" value="Glucanase"/>
    <property type="match status" value="1"/>
</dbReference>
<dbReference type="Gene3D" id="2.70.100.10">
    <property type="entry name" value="Glycoside hydrolase, family 7, domain"/>
    <property type="match status" value="1"/>
</dbReference>
<dbReference type="InterPro" id="IPR013320">
    <property type="entry name" value="ConA-like_dom_sf"/>
</dbReference>
<dbReference type="InterPro" id="IPR001722">
    <property type="entry name" value="Glyco_hydro_7"/>
</dbReference>
<dbReference type="InterPro" id="IPR037019">
    <property type="entry name" value="Glyco_hydro_7_sf"/>
</dbReference>
<dbReference type="PANTHER" id="PTHR33753:SF6">
    <property type="entry name" value="1,4-BETA-D-GLUCAN CELLOBIOHYDROLASE A-RELATED"/>
    <property type="match status" value="1"/>
</dbReference>
<dbReference type="PANTHER" id="PTHR33753">
    <property type="entry name" value="1,4-BETA-D-GLUCAN CELLOBIOHYDROLASE B"/>
    <property type="match status" value="1"/>
</dbReference>
<dbReference type="Pfam" id="PF00840">
    <property type="entry name" value="Glyco_hydro_7"/>
    <property type="match status" value="1"/>
</dbReference>
<dbReference type="PRINTS" id="PR00734">
    <property type="entry name" value="GLHYDRLASE7"/>
</dbReference>
<dbReference type="SUPFAM" id="SSF49899">
    <property type="entry name" value="Concanavalin A-like lectins/glucanases"/>
    <property type="match status" value="1"/>
</dbReference>
<sequence length="452" mass="48135">MHQRALLFSALAVAANAQQVGTQTPETHPPLTWQKCTAAGSCSQQSGSVVIDANWRWLHSTKDTTNCYTGNTWNTELCPDNESCAQNCALDGADYAGTYGVTTSGSELKLSFVTGANVGSRLYLMQDDETYQHFNLLNHEFTFDVDVSNLPCGLNGALYFVAMDADGGMSKYPSNKAGAKYGTGYCDSQCPRDLKFINGMANVEGWEPSSSDKNAGVGGHGSCCPEMDIWEANSISTAVTPHPCDDVSQTMCSGDACGGTYSESRYAGTCDPDGCDFNPFRMGNESFYGPGKIVDTKSKMTVVTQFITADGTDSGALSEIKRLYVQNGKVIANSVSNVAGVSGNSITSDFCTAQKKAFGDEDIFAKHGGLSGMGKALSEMVLIMSIWDDHHSSMMWLDSTYPTDADPSKPGVARGTCEHGAGDPENVESQHPDASVTFSNIKFGPIGSTYEG</sequence>
<organism>
    <name type="scientific">Aspergillus fumigatus (strain ATCC MYA-4609 / CBS 101355 / FGSC A1100 / Af293)</name>
    <name type="common">Neosartorya fumigata</name>
    <dbReference type="NCBI Taxonomy" id="330879"/>
    <lineage>
        <taxon>Eukaryota</taxon>
        <taxon>Fungi</taxon>
        <taxon>Dikarya</taxon>
        <taxon>Ascomycota</taxon>
        <taxon>Pezizomycotina</taxon>
        <taxon>Eurotiomycetes</taxon>
        <taxon>Eurotiomycetidae</taxon>
        <taxon>Eurotiales</taxon>
        <taxon>Aspergillaceae</taxon>
        <taxon>Aspergillus</taxon>
        <taxon>Aspergillus subgen. Fumigati</taxon>
    </lineage>
</organism>
<proteinExistence type="inferred from homology"/>
<protein>
    <recommendedName>
        <fullName>Probable 1,4-beta-D-glucan cellobiohydrolase A</fullName>
        <ecNumber>3.2.1.91</ecNumber>
    </recommendedName>
    <alternativeName>
        <fullName>Beta-glucancellobiohydrolase A</fullName>
    </alternativeName>
    <alternativeName>
        <fullName>Cellobiohydrolase D</fullName>
    </alternativeName>
    <alternativeName>
        <fullName>Exocellobiohydrolase A</fullName>
    </alternativeName>
    <alternativeName>
        <fullName>Exoglucanase A</fullName>
    </alternativeName>
</protein>
<evidence type="ECO:0000250" key="1"/>
<evidence type="ECO:0000255" key="2"/>
<evidence type="ECO:0000256" key="3">
    <source>
        <dbReference type="SAM" id="MobiDB-lite"/>
    </source>
</evidence>
<evidence type="ECO:0000305" key="4"/>
<accession>Q4WNA2</accession>
<comment type="function">
    <text evidence="1">The biological conversion of cellulose to glucose generally requires three types of hydrolytic enzymes: (1) Endoglucanases which cut internal beta-1,4-glucosidic bonds; (2) Exocellobiohydrolases that cut the disaccharide cellobiose from the non-reducing end of the cellulose polymer chain; (3) Beta-1,4-glucosidases which hydrolyze the cellobiose and other short cello-oligosaccharides to glucose.</text>
</comment>
<comment type="catalytic activity">
    <reaction>
        <text>Hydrolysis of (1-&gt;4)-beta-D-glucosidic linkages in cellulose and cellotetraose, releasing cellobiose from the non-reducing ends of the chains.</text>
        <dbReference type="EC" id="3.2.1.91"/>
    </reaction>
</comment>
<comment type="subcellular location">
    <subcellularLocation>
        <location evidence="4">Secreted</location>
    </subcellularLocation>
</comment>
<comment type="similarity">
    <text evidence="4">Belongs to the glycosyl hydrolase 7 (cellulase C) family.</text>
</comment>
<name>CBHA_ASPFU</name>